<keyword id="KW-0963">Cytoplasm</keyword>
<keyword id="KW-1185">Reference proteome</keyword>
<dbReference type="EMBL" id="AE004091">
    <property type="protein sequence ID" value="AAG04953.1"/>
    <property type="molecule type" value="Genomic_DNA"/>
</dbReference>
<dbReference type="PIR" id="B83449">
    <property type="entry name" value="B83449"/>
</dbReference>
<dbReference type="RefSeq" id="NP_250255.1">
    <property type="nucleotide sequence ID" value="NC_002516.2"/>
</dbReference>
<dbReference type="RefSeq" id="WP_003105999.1">
    <property type="nucleotide sequence ID" value="NZ_QZGE01000003.1"/>
</dbReference>
<dbReference type="SMR" id="Q9I3F3"/>
<dbReference type="FunCoup" id="Q9I3F3">
    <property type="interactions" value="362"/>
</dbReference>
<dbReference type="STRING" id="208964.PA1564"/>
<dbReference type="PaxDb" id="208964-PA1564"/>
<dbReference type="DNASU" id="879520"/>
<dbReference type="GeneID" id="879520"/>
<dbReference type="KEGG" id="pae:PA1564"/>
<dbReference type="PATRIC" id="fig|208964.12.peg.1620"/>
<dbReference type="PseudoCAP" id="PA1564"/>
<dbReference type="HOGENOM" id="CLU_165255_5_1_6"/>
<dbReference type="InParanoid" id="Q9I3F3"/>
<dbReference type="OrthoDB" id="9797352at2"/>
<dbReference type="PhylomeDB" id="Q9I3F3"/>
<dbReference type="BioCyc" id="PAER208964:G1FZ6-1593-MONOMER"/>
<dbReference type="Proteomes" id="UP000002438">
    <property type="component" value="Chromosome"/>
</dbReference>
<dbReference type="GO" id="GO:0005737">
    <property type="term" value="C:cytoplasm"/>
    <property type="evidence" value="ECO:0007669"/>
    <property type="project" value="UniProtKB-SubCell"/>
</dbReference>
<dbReference type="GO" id="GO:0097163">
    <property type="term" value="F:sulfur carrier activity"/>
    <property type="evidence" value="ECO:0007669"/>
    <property type="project" value="UniProtKB-UniRule"/>
</dbReference>
<dbReference type="GO" id="GO:0002143">
    <property type="term" value="P:tRNA wobble position uridine thiolation"/>
    <property type="evidence" value="ECO:0007669"/>
    <property type="project" value="InterPro"/>
</dbReference>
<dbReference type="CDD" id="cd03423">
    <property type="entry name" value="SirA"/>
    <property type="match status" value="1"/>
</dbReference>
<dbReference type="Gene3D" id="3.30.110.40">
    <property type="entry name" value="TusA-like domain"/>
    <property type="match status" value="1"/>
</dbReference>
<dbReference type="HAMAP" id="MF_00413">
    <property type="entry name" value="Thiourid_synth_A"/>
    <property type="match status" value="1"/>
</dbReference>
<dbReference type="InterPro" id="IPR022931">
    <property type="entry name" value="Sulphur_carrier_TusA"/>
</dbReference>
<dbReference type="InterPro" id="IPR001455">
    <property type="entry name" value="TusA-like"/>
</dbReference>
<dbReference type="InterPro" id="IPR036868">
    <property type="entry name" value="TusA-like_sf"/>
</dbReference>
<dbReference type="NCBIfam" id="NF001423">
    <property type="entry name" value="PRK00299.1"/>
    <property type="match status" value="1"/>
</dbReference>
<dbReference type="PANTHER" id="PTHR33279:SF2">
    <property type="entry name" value="SULFUR CARRIER PROTEIN TUSA"/>
    <property type="match status" value="1"/>
</dbReference>
<dbReference type="PANTHER" id="PTHR33279">
    <property type="entry name" value="SULFUR CARRIER PROTEIN YEDF-RELATED"/>
    <property type="match status" value="1"/>
</dbReference>
<dbReference type="Pfam" id="PF01206">
    <property type="entry name" value="TusA"/>
    <property type="match status" value="1"/>
</dbReference>
<dbReference type="SUPFAM" id="SSF64307">
    <property type="entry name" value="SirA-like"/>
    <property type="match status" value="1"/>
</dbReference>
<dbReference type="PROSITE" id="PS01148">
    <property type="entry name" value="UPF0033"/>
    <property type="match status" value="1"/>
</dbReference>
<gene>
    <name evidence="1" type="primary">tusA</name>
    <name type="ordered locus">PA1564</name>
</gene>
<organism>
    <name type="scientific">Pseudomonas aeruginosa (strain ATCC 15692 / DSM 22644 / CIP 104116 / JCM 14847 / LMG 12228 / 1C / PRS 101 / PAO1)</name>
    <dbReference type="NCBI Taxonomy" id="208964"/>
    <lineage>
        <taxon>Bacteria</taxon>
        <taxon>Pseudomonadati</taxon>
        <taxon>Pseudomonadota</taxon>
        <taxon>Gammaproteobacteria</taxon>
        <taxon>Pseudomonadales</taxon>
        <taxon>Pseudomonadaceae</taxon>
        <taxon>Pseudomonas</taxon>
    </lineage>
</organism>
<name>TUSA_PSEAE</name>
<comment type="function">
    <text evidence="1">Sulfur carrier protein which probably makes part of a sulfur-relay system.</text>
</comment>
<comment type="subcellular location">
    <subcellularLocation>
        <location evidence="1">Cytoplasm</location>
    </subcellularLocation>
</comment>
<comment type="similarity">
    <text evidence="1">Belongs to the sulfur carrier protein TusA family.</text>
</comment>
<proteinExistence type="inferred from homology"/>
<accession>Q9I3F3</accession>
<sequence>MTHSVDAILDATGLNCPEPVMMLHNKVRDLAPGGLLKVIATDPSTRRDIPKFCVFLGHELVEQQEEAGTYLYWIRKKAD</sequence>
<reference key="1">
    <citation type="journal article" date="2000" name="Nature">
        <title>Complete genome sequence of Pseudomonas aeruginosa PAO1, an opportunistic pathogen.</title>
        <authorList>
            <person name="Stover C.K."/>
            <person name="Pham X.-Q.T."/>
            <person name="Erwin A.L."/>
            <person name="Mizoguchi S.D."/>
            <person name="Warrener P."/>
            <person name="Hickey M.J."/>
            <person name="Brinkman F.S.L."/>
            <person name="Hufnagle W.O."/>
            <person name="Kowalik D.J."/>
            <person name="Lagrou M."/>
            <person name="Garber R.L."/>
            <person name="Goltry L."/>
            <person name="Tolentino E."/>
            <person name="Westbrock-Wadman S."/>
            <person name="Yuan Y."/>
            <person name="Brody L.L."/>
            <person name="Coulter S.N."/>
            <person name="Folger K.R."/>
            <person name="Kas A."/>
            <person name="Larbig K."/>
            <person name="Lim R.M."/>
            <person name="Smith K.A."/>
            <person name="Spencer D.H."/>
            <person name="Wong G.K.-S."/>
            <person name="Wu Z."/>
            <person name="Paulsen I.T."/>
            <person name="Reizer J."/>
            <person name="Saier M.H. Jr."/>
            <person name="Hancock R.E.W."/>
            <person name="Lory S."/>
            <person name="Olson M.V."/>
        </authorList>
    </citation>
    <scope>NUCLEOTIDE SEQUENCE [LARGE SCALE GENOMIC DNA]</scope>
    <source>
        <strain>ATCC 15692 / DSM 22644 / CIP 104116 / JCM 14847 / LMG 12228 / 1C / PRS 101 / PAO1</strain>
    </source>
</reference>
<evidence type="ECO:0000255" key="1">
    <source>
        <dbReference type="HAMAP-Rule" id="MF_00413"/>
    </source>
</evidence>
<feature type="chain" id="PRO_0000159045" description="Sulfur carrier protein TusA">
    <location>
        <begin position="1"/>
        <end position="79"/>
    </location>
</feature>
<feature type="active site" description="Cysteine persulfide intermediate" evidence="1">
    <location>
        <position position="16"/>
    </location>
</feature>
<protein>
    <recommendedName>
        <fullName evidence="1">Sulfur carrier protein TusA</fullName>
    </recommendedName>
</protein>